<keyword id="KW-0533">Nickel</keyword>
<accession>Q12TV0</accession>
<gene>
    <name type="ordered locus">Mbur_2265</name>
</gene>
<comment type="similarity">
    <text evidence="1">Belongs to the LarC family.</text>
</comment>
<evidence type="ECO:0000255" key="1">
    <source>
        <dbReference type="HAMAP-Rule" id="MF_01074"/>
    </source>
</evidence>
<name>Y2265_METBU</name>
<feature type="chain" id="PRO_1000064651" description="Putative nickel insertion protein">
    <location>
        <begin position="1"/>
        <end position="396"/>
    </location>
</feature>
<organism>
    <name type="scientific">Methanococcoides burtonii (strain DSM 6242 / NBRC 107633 / OCM 468 / ACE-M)</name>
    <dbReference type="NCBI Taxonomy" id="259564"/>
    <lineage>
        <taxon>Archaea</taxon>
        <taxon>Methanobacteriati</taxon>
        <taxon>Methanobacteriota</taxon>
        <taxon>Stenosarchaea group</taxon>
        <taxon>Methanomicrobia</taxon>
        <taxon>Methanosarcinales</taxon>
        <taxon>Methanosarcinaceae</taxon>
        <taxon>Methanococcoides</taxon>
    </lineage>
</organism>
<sequence>MRTLVFEPFSGASGDMILAGLIDLGADKGEIVEVIQASVDVSVTIEDITKCGIRATDVNIHTKDSARIRSFGELIDIIKDANLPEEVEKNAIAVFRIIGDAEAKVHGMSLEQLHFHEVGQDDALADVIGSCYAIHRMKVENILCTPVNVGGGSVRTAHGTLPVPVPATTEILSGSGLEVHSNGDRELLTPTGAALLTYFANPSDQLPTGKILTTGYGAGDAETDMPNVLRTMLMETTGNLSRDHMEVLETNVDDVTGEVLGNLFETLMKEGAKDVTITPATMKKGRTGHIIHVIAHPENSERIARELIRQTGTLGVRILPTKHRFIAERKMEKVNIIIGKQTFQVTVKIAHDRSDEVLHISAEFEDCRRISQECGLPLKEVIRRAEEKAWNNILKK</sequence>
<dbReference type="EMBL" id="CP000300">
    <property type="protein sequence ID" value="ABE53126.1"/>
    <property type="molecule type" value="Genomic_DNA"/>
</dbReference>
<dbReference type="RefSeq" id="WP_011500262.1">
    <property type="nucleotide sequence ID" value="NC_007955.1"/>
</dbReference>
<dbReference type="SMR" id="Q12TV0"/>
<dbReference type="STRING" id="259564.Mbur_2265"/>
<dbReference type="GeneID" id="3997219"/>
<dbReference type="KEGG" id="mbu:Mbur_2265"/>
<dbReference type="HOGENOM" id="CLU_028523_2_1_2"/>
<dbReference type="OrthoDB" id="10691at2157"/>
<dbReference type="Proteomes" id="UP000001979">
    <property type="component" value="Chromosome"/>
</dbReference>
<dbReference type="GO" id="GO:0016829">
    <property type="term" value="F:lyase activity"/>
    <property type="evidence" value="ECO:0007669"/>
    <property type="project" value="UniProtKB-UniRule"/>
</dbReference>
<dbReference type="GO" id="GO:0016151">
    <property type="term" value="F:nickel cation binding"/>
    <property type="evidence" value="ECO:0007669"/>
    <property type="project" value="UniProtKB-UniRule"/>
</dbReference>
<dbReference type="Gene3D" id="3.10.20.300">
    <property type="entry name" value="mk0293 like domain"/>
    <property type="match status" value="1"/>
</dbReference>
<dbReference type="Gene3D" id="3.30.70.1380">
    <property type="entry name" value="Transcriptional regulatory protein pf0864 domain like"/>
    <property type="match status" value="1"/>
</dbReference>
<dbReference type="HAMAP" id="MF_01074">
    <property type="entry name" value="LarC"/>
    <property type="match status" value="1"/>
</dbReference>
<dbReference type="InterPro" id="IPR002822">
    <property type="entry name" value="Ni_insertion"/>
</dbReference>
<dbReference type="NCBIfam" id="TIGR00299">
    <property type="entry name" value="nickel pincer cofactor biosynthesis protein LarC"/>
    <property type="match status" value="1"/>
</dbReference>
<dbReference type="PANTHER" id="PTHR36566">
    <property type="entry name" value="NICKEL INSERTION PROTEIN-RELATED"/>
    <property type="match status" value="1"/>
</dbReference>
<dbReference type="PANTHER" id="PTHR36566:SF1">
    <property type="entry name" value="PYRIDINIUM-3,5-BISTHIOCARBOXYLIC ACID MONONUCLEOTIDE NICKEL INSERTION PROTEIN"/>
    <property type="match status" value="1"/>
</dbReference>
<dbReference type="Pfam" id="PF01969">
    <property type="entry name" value="Ni_insertion"/>
    <property type="match status" value="1"/>
</dbReference>
<proteinExistence type="inferred from homology"/>
<reference key="1">
    <citation type="journal article" date="2009" name="ISME J.">
        <title>The genome sequence of the psychrophilic archaeon, Methanococcoides burtonii: the role of genome evolution in cold adaptation.</title>
        <authorList>
            <person name="Allen M.A."/>
            <person name="Lauro F.M."/>
            <person name="Williams T.J."/>
            <person name="Burg D."/>
            <person name="Siddiqui K.S."/>
            <person name="De Francisci D."/>
            <person name="Chong K.W."/>
            <person name="Pilak O."/>
            <person name="Chew H.H."/>
            <person name="De Maere M.Z."/>
            <person name="Ting L."/>
            <person name="Katrib M."/>
            <person name="Ng C."/>
            <person name="Sowers K.R."/>
            <person name="Galperin M.Y."/>
            <person name="Anderson I.J."/>
            <person name="Ivanova N."/>
            <person name="Dalin E."/>
            <person name="Martinez M."/>
            <person name="Lapidus A."/>
            <person name="Hauser L."/>
            <person name="Land M."/>
            <person name="Thomas T."/>
            <person name="Cavicchioli R."/>
        </authorList>
    </citation>
    <scope>NUCLEOTIDE SEQUENCE [LARGE SCALE GENOMIC DNA]</scope>
    <source>
        <strain>DSM 6242 / NBRC 107633 / OCM 468 / ACE-M</strain>
    </source>
</reference>
<protein>
    <recommendedName>
        <fullName evidence="1">Putative nickel insertion protein</fullName>
    </recommendedName>
</protein>